<dbReference type="EC" id="3.5.2.9" evidence="1"/>
<dbReference type="EMBL" id="AE009950">
    <property type="protein sequence ID" value="AAL81396.1"/>
    <property type="molecule type" value="Genomic_DNA"/>
</dbReference>
<dbReference type="RefSeq" id="WP_011012416.1">
    <property type="nucleotide sequence ID" value="NZ_CP023154.1"/>
</dbReference>
<dbReference type="SMR" id="Q8U1D7"/>
<dbReference type="STRING" id="186497.PF1272"/>
<dbReference type="PaxDb" id="186497-PF1272"/>
<dbReference type="KEGG" id="pfu:PF1272"/>
<dbReference type="PATRIC" id="fig|186497.12.peg.1334"/>
<dbReference type="eggNOG" id="arCOG05810">
    <property type="taxonomic scope" value="Archaea"/>
</dbReference>
<dbReference type="HOGENOM" id="CLU_069535_0_0_2"/>
<dbReference type="OrthoDB" id="84497at2157"/>
<dbReference type="PhylomeDB" id="Q8U1D7"/>
<dbReference type="Proteomes" id="UP000001013">
    <property type="component" value="Chromosome"/>
</dbReference>
<dbReference type="GO" id="GO:0017168">
    <property type="term" value="F:5-oxoprolinase (ATP-hydrolyzing) activity"/>
    <property type="evidence" value="ECO:0007669"/>
    <property type="project" value="UniProtKB-UniRule"/>
</dbReference>
<dbReference type="GO" id="GO:0005524">
    <property type="term" value="F:ATP binding"/>
    <property type="evidence" value="ECO:0007669"/>
    <property type="project" value="UniProtKB-UniRule"/>
</dbReference>
<dbReference type="GO" id="GO:0005975">
    <property type="term" value="P:carbohydrate metabolic process"/>
    <property type="evidence" value="ECO:0007669"/>
    <property type="project" value="InterPro"/>
</dbReference>
<dbReference type="CDD" id="cd10787">
    <property type="entry name" value="LamB_YcsF_like"/>
    <property type="match status" value="1"/>
</dbReference>
<dbReference type="Gene3D" id="3.20.20.370">
    <property type="entry name" value="Glycoside hydrolase/deacetylase"/>
    <property type="match status" value="1"/>
</dbReference>
<dbReference type="HAMAP" id="MF_00691">
    <property type="entry name" value="PxpA"/>
    <property type="match status" value="1"/>
</dbReference>
<dbReference type="InterPro" id="IPR011330">
    <property type="entry name" value="Glyco_hydro/deAcase_b/a-brl"/>
</dbReference>
<dbReference type="InterPro" id="IPR005501">
    <property type="entry name" value="LamB/YcsF/PxpA-like"/>
</dbReference>
<dbReference type="NCBIfam" id="NF003814">
    <property type="entry name" value="PRK05406.1-3"/>
    <property type="match status" value="1"/>
</dbReference>
<dbReference type="NCBIfam" id="NF003816">
    <property type="entry name" value="PRK05406.1-5"/>
    <property type="match status" value="1"/>
</dbReference>
<dbReference type="PANTHER" id="PTHR30292:SF0">
    <property type="entry name" value="5-OXOPROLINASE SUBUNIT A"/>
    <property type="match status" value="1"/>
</dbReference>
<dbReference type="PANTHER" id="PTHR30292">
    <property type="entry name" value="UNCHARACTERIZED PROTEIN YBGL-RELATED"/>
    <property type="match status" value="1"/>
</dbReference>
<dbReference type="Pfam" id="PF03746">
    <property type="entry name" value="LamB_YcsF"/>
    <property type="match status" value="1"/>
</dbReference>
<dbReference type="SUPFAM" id="SSF88713">
    <property type="entry name" value="Glycoside hydrolase/deacetylase"/>
    <property type="match status" value="1"/>
</dbReference>
<evidence type="ECO:0000255" key="1">
    <source>
        <dbReference type="HAMAP-Rule" id="MF_00691"/>
    </source>
</evidence>
<accession>Q8U1D7</accession>
<name>PXPA_PYRFU</name>
<keyword id="KW-0067">ATP-binding</keyword>
<keyword id="KW-0378">Hydrolase</keyword>
<keyword id="KW-0547">Nucleotide-binding</keyword>
<keyword id="KW-1185">Reference proteome</keyword>
<organism>
    <name type="scientific">Pyrococcus furiosus (strain ATCC 43587 / DSM 3638 / JCM 8422 / Vc1)</name>
    <dbReference type="NCBI Taxonomy" id="186497"/>
    <lineage>
        <taxon>Archaea</taxon>
        <taxon>Methanobacteriati</taxon>
        <taxon>Methanobacteriota</taxon>
        <taxon>Thermococci</taxon>
        <taxon>Thermococcales</taxon>
        <taxon>Thermococcaceae</taxon>
        <taxon>Pyrococcus</taxon>
    </lineage>
</organism>
<comment type="function">
    <text evidence="1">Catalyzes the cleavage of 5-oxoproline to form L-glutamate coupled to the hydrolysis of ATP to ADP and inorganic phosphate.</text>
</comment>
<comment type="catalytic activity">
    <reaction evidence="1">
        <text>5-oxo-L-proline + ATP + 2 H2O = L-glutamate + ADP + phosphate + H(+)</text>
        <dbReference type="Rhea" id="RHEA:10348"/>
        <dbReference type="ChEBI" id="CHEBI:15377"/>
        <dbReference type="ChEBI" id="CHEBI:15378"/>
        <dbReference type="ChEBI" id="CHEBI:29985"/>
        <dbReference type="ChEBI" id="CHEBI:30616"/>
        <dbReference type="ChEBI" id="CHEBI:43474"/>
        <dbReference type="ChEBI" id="CHEBI:58402"/>
        <dbReference type="ChEBI" id="CHEBI:456216"/>
        <dbReference type="EC" id="3.5.2.9"/>
    </reaction>
</comment>
<comment type="subunit">
    <text evidence="1">Forms a complex composed of PxpA, PxpB and PxpC.</text>
</comment>
<comment type="similarity">
    <text evidence="1">Belongs to the LamB/PxpA family.</text>
</comment>
<sequence length="255" mass="28402">MKVDLNSDLGESFGRYKLGLDDEVMKYITSANVACGWHAGDPLVMRKTVRLAKKNNVQVGAHPGYPDLMGFGRRYMKLTPEEARNYILYQIGALYAFVKAEGLELQHVKPHGALYNAMVKEEDLARAVIEGILDFDKRLIVVTLAGSRVVEIAREMGARVAQEGFADRAYNPDGTLVPRSRPGAVIEDKEEIAERVISMVKDGGIRAINGEWIELEVDTICVHGDNPKAVEITAYIRRRLEEEGVKVLPMGDFIK</sequence>
<protein>
    <recommendedName>
        <fullName evidence="1">5-oxoprolinase subunit A</fullName>
        <shortName evidence="1">5-OPase subunit A</shortName>
        <ecNumber evidence="1">3.5.2.9</ecNumber>
    </recommendedName>
    <alternativeName>
        <fullName evidence="1">5-oxoprolinase (ATP-hydrolyzing) subunit A</fullName>
    </alternativeName>
</protein>
<reference key="1">
    <citation type="journal article" date="1999" name="Genetics">
        <title>Divergence of the hyperthermophilic archaea Pyrococcus furiosus and P. horikoshii inferred from complete genomic sequences.</title>
        <authorList>
            <person name="Maeder D.L."/>
            <person name="Weiss R.B."/>
            <person name="Dunn D.M."/>
            <person name="Cherry J.L."/>
            <person name="Gonzalez J.M."/>
            <person name="DiRuggiero J."/>
            <person name="Robb F.T."/>
        </authorList>
    </citation>
    <scope>NUCLEOTIDE SEQUENCE [LARGE SCALE GENOMIC DNA]</scope>
    <source>
        <strain>ATCC 43587 / DSM 3638 / JCM 8422 / Vc1</strain>
    </source>
</reference>
<proteinExistence type="inferred from homology"/>
<feature type="chain" id="PRO_0000185065" description="5-oxoprolinase subunit A">
    <location>
        <begin position="1"/>
        <end position="255"/>
    </location>
</feature>
<gene>
    <name evidence="1" type="primary">pxpA</name>
    <name type="ordered locus">PF1272</name>
</gene>